<keyword id="KW-0560">Oxidoreductase</keyword>
<keyword id="KW-0819">tRNA processing</keyword>
<comment type="function">
    <text evidence="1">Catalyzes oxygen-dependent 5-hydroxyuridine (ho5U) modification at position 34 in tRNAs.</text>
</comment>
<comment type="catalytic activity">
    <reaction evidence="1">
        <text>uridine(34) in tRNA + AH2 + O2 = 5-hydroxyuridine(34) in tRNA + A + H2O</text>
        <dbReference type="Rhea" id="RHEA:64224"/>
        <dbReference type="Rhea" id="RHEA-COMP:11727"/>
        <dbReference type="Rhea" id="RHEA-COMP:13381"/>
        <dbReference type="ChEBI" id="CHEBI:13193"/>
        <dbReference type="ChEBI" id="CHEBI:15377"/>
        <dbReference type="ChEBI" id="CHEBI:15379"/>
        <dbReference type="ChEBI" id="CHEBI:17499"/>
        <dbReference type="ChEBI" id="CHEBI:65315"/>
        <dbReference type="ChEBI" id="CHEBI:136877"/>
    </reaction>
</comment>
<comment type="similarity">
    <text evidence="1">Belongs to the TrhO family.</text>
</comment>
<reference key="1">
    <citation type="journal article" date="2006" name="J. Bacteriol.">
        <title>Complete genome sequence of Yersinia pestis strains Antiqua and Nepal516: evidence of gene reduction in an emerging pathogen.</title>
        <authorList>
            <person name="Chain P.S.G."/>
            <person name="Hu P."/>
            <person name="Malfatti S.A."/>
            <person name="Radnedge L."/>
            <person name="Larimer F."/>
            <person name="Vergez L.M."/>
            <person name="Worsham P."/>
            <person name="Chu M.C."/>
            <person name="Andersen G.L."/>
        </authorList>
    </citation>
    <scope>NUCLEOTIDE SEQUENCE [LARGE SCALE GENOMIC DNA]</scope>
    <source>
        <strain>Nepal516</strain>
    </source>
</reference>
<reference key="2">
    <citation type="submission" date="2009-04" db="EMBL/GenBank/DDBJ databases">
        <title>Yersinia pestis Nepal516A whole genome shotgun sequencing project.</title>
        <authorList>
            <person name="Plunkett G. III"/>
            <person name="Anderson B.D."/>
            <person name="Baumler D.J."/>
            <person name="Burland V."/>
            <person name="Cabot E.L."/>
            <person name="Glasner J.D."/>
            <person name="Mau B."/>
            <person name="Neeno-Eckwall E."/>
            <person name="Perna N.T."/>
            <person name="Munk A.C."/>
            <person name="Tapia R."/>
            <person name="Green L.D."/>
            <person name="Rogers Y.C."/>
            <person name="Detter J.C."/>
            <person name="Bruce D.C."/>
            <person name="Brettin T.S."/>
        </authorList>
    </citation>
    <scope>NUCLEOTIDE SEQUENCE [LARGE SCALE GENOMIC DNA]</scope>
    <source>
        <strain>Nepal516</strain>
    </source>
</reference>
<accession>Q1CI03</accession>
<accession>C4GU17</accession>
<gene>
    <name evidence="1" type="primary">trhO</name>
    <name type="ordered locus">YPN_2048</name>
    <name type="ORF">YP516_2283</name>
</gene>
<name>TRHO_YERPN</name>
<dbReference type="EC" id="1.14.-.-" evidence="1"/>
<dbReference type="EMBL" id="CP000305">
    <property type="protein sequence ID" value="ABG18377.1"/>
    <property type="molecule type" value="Genomic_DNA"/>
</dbReference>
<dbReference type="EMBL" id="ACNQ01000013">
    <property type="protein sequence ID" value="EEO76086.1"/>
    <property type="molecule type" value="Genomic_DNA"/>
</dbReference>
<dbReference type="RefSeq" id="WP_002211854.1">
    <property type="nucleotide sequence ID" value="NZ_ACNQ01000013.1"/>
</dbReference>
<dbReference type="SMR" id="Q1CI03"/>
<dbReference type="KEGG" id="ypn:YPN_2048"/>
<dbReference type="HOGENOM" id="CLU_038878_1_1_6"/>
<dbReference type="Proteomes" id="UP000008936">
    <property type="component" value="Chromosome"/>
</dbReference>
<dbReference type="GO" id="GO:0016705">
    <property type="term" value="F:oxidoreductase activity, acting on paired donors, with incorporation or reduction of molecular oxygen"/>
    <property type="evidence" value="ECO:0007669"/>
    <property type="project" value="UniProtKB-UniRule"/>
</dbReference>
<dbReference type="GO" id="GO:0006400">
    <property type="term" value="P:tRNA modification"/>
    <property type="evidence" value="ECO:0007669"/>
    <property type="project" value="UniProtKB-UniRule"/>
</dbReference>
<dbReference type="CDD" id="cd01518">
    <property type="entry name" value="RHOD_YceA"/>
    <property type="match status" value="1"/>
</dbReference>
<dbReference type="Gene3D" id="3.30.70.100">
    <property type="match status" value="1"/>
</dbReference>
<dbReference type="Gene3D" id="3.40.250.10">
    <property type="entry name" value="Rhodanese-like domain"/>
    <property type="match status" value="1"/>
</dbReference>
<dbReference type="HAMAP" id="MF_00469">
    <property type="entry name" value="TrhO"/>
    <property type="match status" value="1"/>
</dbReference>
<dbReference type="InterPro" id="IPR001763">
    <property type="entry name" value="Rhodanese-like_dom"/>
</dbReference>
<dbReference type="InterPro" id="IPR036873">
    <property type="entry name" value="Rhodanese-like_dom_sf"/>
</dbReference>
<dbReference type="InterPro" id="IPR022111">
    <property type="entry name" value="Rhodanese_C"/>
</dbReference>
<dbReference type="InterPro" id="IPR020936">
    <property type="entry name" value="TrhO"/>
</dbReference>
<dbReference type="InterPro" id="IPR040503">
    <property type="entry name" value="TRHO_N"/>
</dbReference>
<dbReference type="NCBIfam" id="NF001133">
    <property type="entry name" value="PRK00142.1-1"/>
    <property type="match status" value="1"/>
</dbReference>
<dbReference type="PANTHER" id="PTHR43846:SF1">
    <property type="entry name" value="TRNA URIDINE(34) HYDROXYLASE"/>
    <property type="match status" value="1"/>
</dbReference>
<dbReference type="PANTHER" id="PTHR43846">
    <property type="entry name" value="UPF0176 PROTEIN YCEA"/>
    <property type="match status" value="1"/>
</dbReference>
<dbReference type="Pfam" id="PF00581">
    <property type="entry name" value="Rhodanese"/>
    <property type="match status" value="1"/>
</dbReference>
<dbReference type="Pfam" id="PF12368">
    <property type="entry name" value="Rhodanese_C"/>
    <property type="match status" value="1"/>
</dbReference>
<dbReference type="Pfam" id="PF17773">
    <property type="entry name" value="UPF0176_N"/>
    <property type="match status" value="1"/>
</dbReference>
<dbReference type="SMART" id="SM00450">
    <property type="entry name" value="RHOD"/>
    <property type="match status" value="1"/>
</dbReference>
<dbReference type="SUPFAM" id="SSF52821">
    <property type="entry name" value="Rhodanese/Cell cycle control phosphatase"/>
    <property type="match status" value="1"/>
</dbReference>
<dbReference type="PROSITE" id="PS50206">
    <property type="entry name" value="RHODANESE_3"/>
    <property type="match status" value="1"/>
</dbReference>
<sequence>MPVLHNRISNEELKARMLAETEPRTTVSFYKYFTLEDAKTFRDNLYSQFVKLGVFGRVYVAKEGINAQISVPANRYDEFKIALFASHPALDQVRLNVAHEDDGKSFWVLRLKVRERIVADGIDDDSFDPANIGHYLKADQVNQMIDDPDTLFVDMRNHYEYEVGHFENAIEVPSDTFREQLPMAVDMLQHDKEKNIVMYCTGGIRCEKASAYMLHNGFKNVYHVEGGIIEYARKAKEQGLPLKFIGKNFVFDERMGERISDDVIAHCHQCGTPCDAHTNCKNDGCHLLFIQCPVCAAKFEGCCSQICQEELKLPQEEQRSRRAGRENGIKIFNKSKGLLQATMHIPSPEKSADEK</sequence>
<feature type="chain" id="PRO_1000013795" description="tRNA uridine(34) hydroxylase">
    <location>
        <begin position="1"/>
        <end position="355"/>
    </location>
</feature>
<feature type="domain" description="Rhodanese" evidence="1">
    <location>
        <begin position="146"/>
        <end position="240"/>
    </location>
</feature>
<feature type="region of interest" description="Disordered" evidence="2">
    <location>
        <begin position="333"/>
        <end position="355"/>
    </location>
</feature>
<feature type="active site" description="Cysteine persulfide intermediate" evidence="1">
    <location>
        <position position="200"/>
    </location>
</feature>
<protein>
    <recommendedName>
        <fullName evidence="1">tRNA uridine(34) hydroxylase</fullName>
        <ecNumber evidence="1">1.14.-.-</ecNumber>
    </recommendedName>
    <alternativeName>
        <fullName evidence="1">tRNA hydroxylation protein O</fullName>
    </alternativeName>
</protein>
<organism>
    <name type="scientific">Yersinia pestis bv. Antiqua (strain Nepal516)</name>
    <dbReference type="NCBI Taxonomy" id="377628"/>
    <lineage>
        <taxon>Bacteria</taxon>
        <taxon>Pseudomonadati</taxon>
        <taxon>Pseudomonadota</taxon>
        <taxon>Gammaproteobacteria</taxon>
        <taxon>Enterobacterales</taxon>
        <taxon>Yersiniaceae</taxon>
        <taxon>Yersinia</taxon>
    </lineage>
</organism>
<evidence type="ECO:0000255" key="1">
    <source>
        <dbReference type="HAMAP-Rule" id="MF_00469"/>
    </source>
</evidence>
<evidence type="ECO:0000256" key="2">
    <source>
        <dbReference type="SAM" id="MobiDB-lite"/>
    </source>
</evidence>
<proteinExistence type="inferred from homology"/>